<name>SYGA_SHOC1</name>
<gene>
    <name evidence="1" type="primary">glyQ</name>
    <name type="ordered locus">ABC1684</name>
</gene>
<protein>
    <recommendedName>
        <fullName evidence="1">Glycine--tRNA ligase alpha subunit</fullName>
        <ecNumber evidence="1">6.1.1.14</ecNumber>
    </recommendedName>
    <alternativeName>
        <fullName evidence="1">Glycyl-tRNA synthetase alpha subunit</fullName>
        <shortName evidence="1">GlyRS</shortName>
    </alternativeName>
</protein>
<reference key="1">
    <citation type="submission" date="2003-10" db="EMBL/GenBank/DDBJ databases">
        <title>The complete genome sequence of the alkaliphilic Bacillus clausii KSM-K16.</title>
        <authorList>
            <person name="Takaki Y."/>
            <person name="Kageyama Y."/>
            <person name="Shimamura S."/>
            <person name="Suzuki H."/>
            <person name="Nishi S."/>
            <person name="Hatada Y."/>
            <person name="Kawai S."/>
            <person name="Ito S."/>
            <person name="Horikoshi K."/>
        </authorList>
    </citation>
    <scope>NUCLEOTIDE SEQUENCE [LARGE SCALE GENOMIC DNA]</scope>
    <source>
        <strain>KSM-K16</strain>
    </source>
</reference>
<organism>
    <name type="scientific">Shouchella clausii (strain KSM-K16)</name>
    <name type="common">Alkalihalobacillus clausii</name>
    <dbReference type="NCBI Taxonomy" id="66692"/>
    <lineage>
        <taxon>Bacteria</taxon>
        <taxon>Bacillati</taxon>
        <taxon>Bacillota</taxon>
        <taxon>Bacilli</taxon>
        <taxon>Bacillales</taxon>
        <taxon>Bacillaceae</taxon>
        <taxon>Shouchella</taxon>
    </lineage>
</organism>
<sequence length="295" mass="34156">MNVQTMILTLQSFWAKQNCIILNAYDTEKGAGTMSPHTLLRTIGPEPWNVAYVEPSRRPADGRYGENPNRLYQHHQFQVIMKPSPLNIQELYLDSLRALGIDPLKHDIRFVEDNWENPTLGCAGLGWEVWLDGMEITQFTYFQQVGGMEANPVSAEITYGLERLATYIQDKENVFDLEWVEGFTYGDIFLQPEYEHSTYTFEVSNVDMLFDLFSTYEKEAERALARDLVFPAYDYILKCSHSFNLLDARGAISVTERTGYIARVRTLARKAARKYYEEREKLGFPMLKKEDAHDE</sequence>
<keyword id="KW-0030">Aminoacyl-tRNA synthetase</keyword>
<keyword id="KW-0067">ATP-binding</keyword>
<keyword id="KW-0963">Cytoplasm</keyword>
<keyword id="KW-0436">Ligase</keyword>
<keyword id="KW-0547">Nucleotide-binding</keyword>
<keyword id="KW-0648">Protein biosynthesis</keyword>
<keyword id="KW-1185">Reference proteome</keyword>
<evidence type="ECO:0000255" key="1">
    <source>
        <dbReference type="HAMAP-Rule" id="MF_00254"/>
    </source>
</evidence>
<comment type="catalytic activity">
    <reaction evidence="1">
        <text>tRNA(Gly) + glycine + ATP = glycyl-tRNA(Gly) + AMP + diphosphate</text>
        <dbReference type="Rhea" id="RHEA:16013"/>
        <dbReference type="Rhea" id="RHEA-COMP:9664"/>
        <dbReference type="Rhea" id="RHEA-COMP:9683"/>
        <dbReference type="ChEBI" id="CHEBI:30616"/>
        <dbReference type="ChEBI" id="CHEBI:33019"/>
        <dbReference type="ChEBI" id="CHEBI:57305"/>
        <dbReference type="ChEBI" id="CHEBI:78442"/>
        <dbReference type="ChEBI" id="CHEBI:78522"/>
        <dbReference type="ChEBI" id="CHEBI:456215"/>
        <dbReference type="EC" id="6.1.1.14"/>
    </reaction>
</comment>
<comment type="subunit">
    <text evidence="1">Tetramer of two alpha and two beta subunits.</text>
</comment>
<comment type="subcellular location">
    <subcellularLocation>
        <location evidence="1">Cytoplasm</location>
    </subcellularLocation>
</comment>
<comment type="similarity">
    <text evidence="1">Belongs to the class-II aminoacyl-tRNA synthetase family.</text>
</comment>
<proteinExistence type="inferred from homology"/>
<feature type="chain" id="PRO_1000047399" description="Glycine--tRNA ligase alpha subunit">
    <location>
        <begin position="1"/>
        <end position="295"/>
    </location>
</feature>
<dbReference type="EC" id="6.1.1.14" evidence="1"/>
<dbReference type="EMBL" id="AP006627">
    <property type="protein sequence ID" value="BAD64219.1"/>
    <property type="molecule type" value="Genomic_DNA"/>
</dbReference>
<dbReference type="RefSeq" id="WP_011246528.1">
    <property type="nucleotide sequence ID" value="NC_006582.1"/>
</dbReference>
<dbReference type="SMR" id="Q5WHD6"/>
<dbReference type="STRING" id="66692.ABC1684"/>
<dbReference type="KEGG" id="bcl:ABC1684"/>
<dbReference type="eggNOG" id="COG0752">
    <property type="taxonomic scope" value="Bacteria"/>
</dbReference>
<dbReference type="HOGENOM" id="CLU_057066_1_0_9"/>
<dbReference type="OrthoDB" id="9802183at2"/>
<dbReference type="Proteomes" id="UP000001168">
    <property type="component" value="Chromosome"/>
</dbReference>
<dbReference type="GO" id="GO:0005829">
    <property type="term" value="C:cytosol"/>
    <property type="evidence" value="ECO:0007669"/>
    <property type="project" value="TreeGrafter"/>
</dbReference>
<dbReference type="GO" id="GO:0005524">
    <property type="term" value="F:ATP binding"/>
    <property type="evidence" value="ECO:0007669"/>
    <property type="project" value="UniProtKB-UniRule"/>
</dbReference>
<dbReference type="GO" id="GO:0140096">
    <property type="term" value="F:catalytic activity, acting on a protein"/>
    <property type="evidence" value="ECO:0007669"/>
    <property type="project" value="UniProtKB-ARBA"/>
</dbReference>
<dbReference type="GO" id="GO:0004820">
    <property type="term" value="F:glycine-tRNA ligase activity"/>
    <property type="evidence" value="ECO:0007669"/>
    <property type="project" value="UniProtKB-UniRule"/>
</dbReference>
<dbReference type="GO" id="GO:0016740">
    <property type="term" value="F:transferase activity"/>
    <property type="evidence" value="ECO:0007669"/>
    <property type="project" value="UniProtKB-ARBA"/>
</dbReference>
<dbReference type="GO" id="GO:0006426">
    <property type="term" value="P:glycyl-tRNA aminoacylation"/>
    <property type="evidence" value="ECO:0007669"/>
    <property type="project" value="UniProtKB-UniRule"/>
</dbReference>
<dbReference type="CDD" id="cd00733">
    <property type="entry name" value="GlyRS_alpha_core"/>
    <property type="match status" value="1"/>
</dbReference>
<dbReference type="FunFam" id="3.30.930.10:FF:000006">
    <property type="entry name" value="Glycine--tRNA ligase alpha subunit"/>
    <property type="match status" value="1"/>
</dbReference>
<dbReference type="Gene3D" id="3.30.930.10">
    <property type="entry name" value="Bira Bifunctional Protein, Domain 2"/>
    <property type="match status" value="1"/>
</dbReference>
<dbReference type="Gene3D" id="1.20.58.180">
    <property type="entry name" value="Class II aaRS and biotin synthetases, domain 2"/>
    <property type="match status" value="1"/>
</dbReference>
<dbReference type="HAMAP" id="MF_00254">
    <property type="entry name" value="Gly_tRNA_synth_alpha"/>
    <property type="match status" value="1"/>
</dbReference>
<dbReference type="InterPro" id="IPR045864">
    <property type="entry name" value="aa-tRNA-synth_II/BPL/LPL"/>
</dbReference>
<dbReference type="InterPro" id="IPR006194">
    <property type="entry name" value="Gly-tRNA-synth_heterodimer"/>
</dbReference>
<dbReference type="InterPro" id="IPR002310">
    <property type="entry name" value="Gly-tRNA_ligase_asu"/>
</dbReference>
<dbReference type="NCBIfam" id="TIGR00388">
    <property type="entry name" value="glyQ"/>
    <property type="match status" value="1"/>
</dbReference>
<dbReference type="NCBIfam" id="NF006827">
    <property type="entry name" value="PRK09348.1"/>
    <property type="match status" value="1"/>
</dbReference>
<dbReference type="PANTHER" id="PTHR30075:SF2">
    <property type="entry name" value="GLYCINE--TRNA LIGASE, CHLOROPLASTIC_MITOCHONDRIAL 2"/>
    <property type="match status" value="1"/>
</dbReference>
<dbReference type="PANTHER" id="PTHR30075">
    <property type="entry name" value="GLYCYL-TRNA SYNTHETASE"/>
    <property type="match status" value="1"/>
</dbReference>
<dbReference type="Pfam" id="PF02091">
    <property type="entry name" value="tRNA-synt_2e"/>
    <property type="match status" value="1"/>
</dbReference>
<dbReference type="PRINTS" id="PR01044">
    <property type="entry name" value="TRNASYNTHGA"/>
</dbReference>
<dbReference type="SUPFAM" id="SSF55681">
    <property type="entry name" value="Class II aaRS and biotin synthetases"/>
    <property type="match status" value="1"/>
</dbReference>
<dbReference type="PROSITE" id="PS50861">
    <property type="entry name" value="AA_TRNA_LIGASE_II_GLYAB"/>
    <property type="match status" value="1"/>
</dbReference>
<accession>Q5WHD6</accession>